<accession>P47815</accession>
<feature type="initiator methionine" description="Removed">
    <location>
        <position position="1"/>
    </location>
</feature>
<feature type="chain" id="PRO_0000145111" description="Eukaryotic translation initiation factor 1A">
    <location>
        <begin position="2"/>
        <end position="144"/>
    </location>
</feature>
<feature type="domain" description="S1-like">
    <location>
        <begin position="22"/>
        <end position="96"/>
    </location>
</feature>
<feature type="region of interest" description="Disordered" evidence="1">
    <location>
        <begin position="1"/>
        <end position="25"/>
    </location>
</feature>
<feature type="region of interest" description="Disordered" evidence="1">
    <location>
        <begin position="120"/>
        <end position="144"/>
    </location>
</feature>
<feature type="compositionally biased region" description="Basic residues" evidence="1">
    <location>
        <begin position="1"/>
        <end position="15"/>
    </location>
</feature>
<feature type="compositionally biased region" description="Basic and acidic residues" evidence="1">
    <location>
        <begin position="16"/>
        <end position="25"/>
    </location>
</feature>
<feature type="sequence variant" description="Could be a sequencing error.">
    <original>W</original>
    <variation>L</variation>
    <location>
        <position position="70"/>
    </location>
</feature>
<feature type="sequence variant" description="Could be a sequencing error.">
    <original>V</original>
    <variation>L</variation>
    <location>
        <position position="113"/>
    </location>
</feature>
<protein>
    <recommendedName>
        <fullName>Eukaryotic translation initiation factor 1A</fullName>
        <shortName>eIF-1A</shortName>
    </recommendedName>
    <alternativeName>
        <fullName>Eukaryotic translation initiation factor 4C</fullName>
        <shortName>eIF-4C</shortName>
    </alternativeName>
</protein>
<reference key="1">
    <citation type="journal article" date="1994" name="J. Biol. Chem.">
        <title>Determination of the amino acid sequence of rabbit, human, and wheat germ protein synthesis factor eIF-4C by cloning and chemical sequencing.</title>
        <authorList>
            <person name="Dever T.E."/>
            <person name="Wei C.-L."/>
            <person name="Benkowski L.A."/>
            <person name="Browning K."/>
            <person name="Merrick W.C."/>
            <person name="Hershey J.W.B."/>
        </authorList>
    </citation>
    <scope>PARTIAL PROTEIN SEQUENCE</scope>
    <scope>NUCLEOTIDE SEQUENCE OF 25-144</scope>
</reference>
<comment type="function">
    <text>Seems to be required for maximal rate of protein biosynthesis. Enhances ribosome dissociation into subunits and stabilizes the binding of the initiator Met-tRNA(I) to 40 S ribosomal subunits.</text>
</comment>
<comment type="similarity">
    <text evidence="2">Belongs to the eIF-1A family.</text>
</comment>
<evidence type="ECO:0000256" key="1">
    <source>
        <dbReference type="SAM" id="MobiDB-lite"/>
    </source>
</evidence>
<evidence type="ECO:0000305" key="2"/>
<keyword id="KW-0903">Direct protein sequencing</keyword>
<keyword id="KW-0396">Initiation factor</keyword>
<keyword id="KW-0648">Protein biosynthesis</keyword>
<keyword id="KW-1185">Reference proteome</keyword>
<sequence length="144" mass="16289">MPKNKGKGGKNRKRGKNEADDDKRELVFKEDGQEYAQVTRMLGNGRCEAICVDGTKRLCHIRGKMHKKVWIAAGDIVLVGLRDYQDDKADVILKYMNDEARLLKAYGELPDTVRLNEGVDVDGPEEGEGDSDYIQFEDEDIDKI</sequence>
<dbReference type="EMBL" id="L08060">
    <property type="status" value="NOT_ANNOTATED_CDS"/>
    <property type="molecule type" value="mRNA"/>
</dbReference>
<dbReference type="SMR" id="P47815"/>
<dbReference type="STRING" id="4565.P47815"/>
<dbReference type="PaxDb" id="4565-Traes_7DL_FCD23BB40.2"/>
<dbReference type="eggNOG" id="KOG3403">
    <property type="taxonomic scope" value="Eukaryota"/>
</dbReference>
<dbReference type="Proteomes" id="UP000019116">
    <property type="component" value="Unplaced"/>
</dbReference>
<dbReference type="ExpressionAtlas" id="P47815">
    <property type="expression patterns" value="baseline and differential"/>
</dbReference>
<dbReference type="GO" id="GO:0005737">
    <property type="term" value="C:cytoplasm"/>
    <property type="evidence" value="ECO:0000318"/>
    <property type="project" value="GO_Central"/>
</dbReference>
<dbReference type="GO" id="GO:0003723">
    <property type="term" value="F:RNA binding"/>
    <property type="evidence" value="ECO:0007669"/>
    <property type="project" value="InterPro"/>
</dbReference>
<dbReference type="GO" id="GO:0003743">
    <property type="term" value="F:translation initiation factor activity"/>
    <property type="evidence" value="ECO:0000318"/>
    <property type="project" value="GO_Central"/>
</dbReference>
<dbReference type="GO" id="GO:0006413">
    <property type="term" value="P:translational initiation"/>
    <property type="evidence" value="ECO:0000318"/>
    <property type="project" value="GO_Central"/>
</dbReference>
<dbReference type="CDD" id="cd05793">
    <property type="entry name" value="S1_IF1A"/>
    <property type="match status" value="1"/>
</dbReference>
<dbReference type="Gene3D" id="2.40.50.140">
    <property type="entry name" value="Nucleic acid-binding proteins"/>
    <property type="match status" value="1"/>
</dbReference>
<dbReference type="HAMAP" id="MF_00216">
    <property type="entry name" value="aIF_1A"/>
    <property type="match status" value="1"/>
</dbReference>
<dbReference type="InterPro" id="IPR012340">
    <property type="entry name" value="NA-bd_OB-fold"/>
</dbReference>
<dbReference type="InterPro" id="IPR006196">
    <property type="entry name" value="RNA-binding_domain_S1_IF1"/>
</dbReference>
<dbReference type="InterPro" id="IPR001253">
    <property type="entry name" value="TIF_eIF-1A"/>
</dbReference>
<dbReference type="InterPro" id="IPR018104">
    <property type="entry name" value="TIF_eIF-1A_CS"/>
</dbReference>
<dbReference type="NCBIfam" id="TIGR00523">
    <property type="entry name" value="eIF-1A"/>
    <property type="match status" value="1"/>
</dbReference>
<dbReference type="PANTHER" id="PTHR21668">
    <property type="entry name" value="EIF-1A"/>
    <property type="match status" value="1"/>
</dbReference>
<dbReference type="Pfam" id="PF01176">
    <property type="entry name" value="eIF-1a"/>
    <property type="match status" value="1"/>
</dbReference>
<dbReference type="SMART" id="SM00652">
    <property type="entry name" value="eIF1a"/>
    <property type="match status" value="1"/>
</dbReference>
<dbReference type="SUPFAM" id="SSF50249">
    <property type="entry name" value="Nucleic acid-binding proteins"/>
    <property type="match status" value="1"/>
</dbReference>
<dbReference type="PROSITE" id="PS01262">
    <property type="entry name" value="IF1A"/>
    <property type="match status" value="1"/>
</dbReference>
<dbReference type="PROSITE" id="PS50832">
    <property type="entry name" value="S1_IF1_TYPE"/>
    <property type="match status" value="1"/>
</dbReference>
<name>IF1A_WHEAT</name>
<proteinExistence type="evidence at protein level"/>
<organism>
    <name type="scientific">Triticum aestivum</name>
    <name type="common">Wheat</name>
    <dbReference type="NCBI Taxonomy" id="4565"/>
    <lineage>
        <taxon>Eukaryota</taxon>
        <taxon>Viridiplantae</taxon>
        <taxon>Streptophyta</taxon>
        <taxon>Embryophyta</taxon>
        <taxon>Tracheophyta</taxon>
        <taxon>Spermatophyta</taxon>
        <taxon>Magnoliopsida</taxon>
        <taxon>Liliopsida</taxon>
        <taxon>Poales</taxon>
        <taxon>Poaceae</taxon>
        <taxon>BOP clade</taxon>
        <taxon>Pooideae</taxon>
        <taxon>Triticodae</taxon>
        <taxon>Triticeae</taxon>
        <taxon>Triticinae</taxon>
        <taxon>Triticum</taxon>
    </lineage>
</organism>